<reference key="1">
    <citation type="journal article" date="1994" name="Proc. Natl. Acad. Sci. U.S.A.">
        <title>Evolution of translational elongation factor (EF) sequences: reliability of global phylogenies inferred from EF-1 alpha(Tu) and EF-2(G) proteins.</title>
        <authorList>
            <person name="Creti R."/>
            <person name="Ceccarelli E."/>
            <person name="Bocchetta M."/>
            <person name="Sanangelantoni A.M."/>
            <person name="Tiboni O."/>
            <person name="Palm P."/>
            <person name="Cammarano P."/>
        </authorList>
    </citation>
    <scope>NUCLEOTIDE SEQUENCE [GENOMIC DNA]</scope>
    <source>
        <strain>ATCC 35582 / DSM 2161 / JCM 9186 / Hvv 3/9</strain>
    </source>
</reference>
<organism>
    <name type="scientific">Desulfurococcus mucosus</name>
    <name type="common">Desulfurococcus mobilis</name>
    <dbReference type="NCBI Taxonomy" id="2275"/>
    <lineage>
        <taxon>Archaea</taxon>
        <taxon>Thermoproteota</taxon>
        <taxon>Thermoprotei</taxon>
        <taxon>Desulfurococcales</taxon>
        <taxon>Desulfurococcaceae</taxon>
        <taxon>Desulfurococcus</taxon>
    </lineage>
</organism>
<sequence>MVRFKQTSEVLKIMRNIEQIRNIGITAHVDHGKTTLSDSLLSAAGLLSEKIAGQALALDYLDVEQKRQMTVKAANASLYHEYKGKPYLINLIDTPGHVDFQSKTIRALRVIDGAIVVVDAVEGVMTQTEMYLRVALEERVRPVLFINKIDRLIKELRSPNEIQQRLVQIVKDVNTLIATYADKEFQKAWLLDPMKGQAFGSARDRWGLTIPLVQQKGIKFSDIVDVYTKGKEAVAELQKAAPLHEAILDMVVKYVPNPRDAQRYRIPKIWHGDLNHEAVKYMMEADPNGPLVMLVNDIRVDPHAGLVATGRIYSGTLRAGEEVWLVNARVPQRVLQVSLYMGPYRELADEITAGNIAAALALEKARSGETVVAMKYKDSMTPFEKLRMITESVVTVAIEPKNPQQLTKLVDALYKLHLEDPSLIVKINEETGEYLLSGVGTLHIEIALTLLKDLYGLEVVASPPVIVYRETVRESSQVFEGKSPNKHNKFYISVAPLNEETLRLMSEGIIVEDMDARERAKILREQAGWDADEARRIMAIDENLNMLVDMTTGVQYLREIKDTVIQGFRLAMKEGPLAMEPVRGVKVVLHDAVVHEDPAHRGPAQIFPAVRNAIFAGFLTAKPTILEPILKLDIRTPMEYIGNISTVITKKRGKLIEVQQMETSARVIAEIPVSESFDIADMLRNVTAGKAIWGQEFSRWAPVPESMLMDLVSKIRTRKGLKPEPPKLEDFLSP</sequence>
<protein>
    <recommendedName>
        <fullName>Elongation factor 2</fullName>
        <shortName>EF-2</shortName>
    </recommendedName>
</protein>
<dbReference type="EMBL" id="X68014">
    <property type="protein sequence ID" value="CAA48150.1"/>
    <property type="molecule type" value="Genomic_DNA"/>
</dbReference>
<dbReference type="PIR" id="S54740">
    <property type="entry name" value="S25166"/>
</dbReference>
<dbReference type="SMR" id="P33159"/>
<dbReference type="GO" id="GO:0005829">
    <property type="term" value="C:cytosol"/>
    <property type="evidence" value="ECO:0007669"/>
    <property type="project" value="TreeGrafter"/>
</dbReference>
<dbReference type="GO" id="GO:1990904">
    <property type="term" value="C:ribonucleoprotein complex"/>
    <property type="evidence" value="ECO:0007669"/>
    <property type="project" value="TreeGrafter"/>
</dbReference>
<dbReference type="GO" id="GO:0005525">
    <property type="term" value="F:GTP binding"/>
    <property type="evidence" value="ECO:0007669"/>
    <property type="project" value="UniProtKB-UniRule"/>
</dbReference>
<dbReference type="GO" id="GO:0003924">
    <property type="term" value="F:GTPase activity"/>
    <property type="evidence" value="ECO:0007669"/>
    <property type="project" value="InterPro"/>
</dbReference>
<dbReference type="GO" id="GO:0003746">
    <property type="term" value="F:translation elongation factor activity"/>
    <property type="evidence" value="ECO:0007669"/>
    <property type="project" value="UniProtKB-UniRule"/>
</dbReference>
<dbReference type="CDD" id="cd01681">
    <property type="entry name" value="aeEF2_snRNP_like_IV"/>
    <property type="match status" value="1"/>
</dbReference>
<dbReference type="CDD" id="cd01885">
    <property type="entry name" value="EF2"/>
    <property type="match status" value="1"/>
</dbReference>
<dbReference type="CDD" id="cd16268">
    <property type="entry name" value="EF2_II"/>
    <property type="match status" value="1"/>
</dbReference>
<dbReference type="CDD" id="cd01514">
    <property type="entry name" value="Elongation_Factor_C"/>
    <property type="match status" value="1"/>
</dbReference>
<dbReference type="FunFam" id="3.30.230.10:FF:000009">
    <property type="entry name" value="116 kDa U5 small nuclear ribonucleoprotein component"/>
    <property type="match status" value="1"/>
</dbReference>
<dbReference type="FunFam" id="3.30.70.870:FF:000002">
    <property type="entry name" value="Translation elongation factor 2"/>
    <property type="match status" value="1"/>
</dbReference>
<dbReference type="Gene3D" id="3.30.230.10">
    <property type="match status" value="1"/>
</dbReference>
<dbReference type="Gene3D" id="3.30.70.240">
    <property type="match status" value="1"/>
</dbReference>
<dbReference type="Gene3D" id="3.30.70.870">
    <property type="entry name" value="Elongation Factor G (Translational Gtpase), domain 3"/>
    <property type="match status" value="1"/>
</dbReference>
<dbReference type="Gene3D" id="3.40.50.300">
    <property type="entry name" value="P-loop containing nucleotide triphosphate hydrolases"/>
    <property type="match status" value="1"/>
</dbReference>
<dbReference type="Gene3D" id="2.40.30.10">
    <property type="entry name" value="Translation factors"/>
    <property type="match status" value="1"/>
</dbReference>
<dbReference type="HAMAP" id="MF_00054_A">
    <property type="entry name" value="EF_G_EF_2_A"/>
    <property type="match status" value="1"/>
</dbReference>
<dbReference type="InterPro" id="IPR041095">
    <property type="entry name" value="EFG_II"/>
</dbReference>
<dbReference type="InterPro" id="IPR035647">
    <property type="entry name" value="EFG_III/V"/>
</dbReference>
<dbReference type="InterPro" id="IPR000640">
    <property type="entry name" value="EFG_V-like"/>
</dbReference>
<dbReference type="InterPro" id="IPR004161">
    <property type="entry name" value="EFTu-like_2"/>
</dbReference>
<dbReference type="InterPro" id="IPR027417">
    <property type="entry name" value="P-loop_NTPase"/>
</dbReference>
<dbReference type="InterPro" id="IPR020568">
    <property type="entry name" value="Ribosomal_Su5_D2-typ_SF"/>
</dbReference>
<dbReference type="InterPro" id="IPR014721">
    <property type="entry name" value="Ribsml_uS5_D2-typ_fold_subgr"/>
</dbReference>
<dbReference type="InterPro" id="IPR005225">
    <property type="entry name" value="Small_GTP-bd"/>
</dbReference>
<dbReference type="InterPro" id="IPR000795">
    <property type="entry name" value="T_Tr_GTP-bd_dom"/>
</dbReference>
<dbReference type="InterPro" id="IPR009000">
    <property type="entry name" value="Transl_B-barrel_sf"/>
</dbReference>
<dbReference type="InterPro" id="IPR004543">
    <property type="entry name" value="Transl_elong_EFG/EF2_arc"/>
</dbReference>
<dbReference type="InterPro" id="IPR005517">
    <property type="entry name" value="Transl_elong_EFG/EF2_IV"/>
</dbReference>
<dbReference type="NCBIfam" id="TIGR00490">
    <property type="entry name" value="aEF-2"/>
    <property type="match status" value="1"/>
</dbReference>
<dbReference type="NCBIfam" id="TIGR00231">
    <property type="entry name" value="small_GTP"/>
    <property type="match status" value="1"/>
</dbReference>
<dbReference type="PANTHER" id="PTHR42908:SF3">
    <property type="entry name" value="ELONGATION FACTOR-LIKE GTPASE 1"/>
    <property type="match status" value="1"/>
</dbReference>
<dbReference type="PANTHER" id="PTHR42908">
    <property type="entry name" value="TRANSLATION ELONGATION FACTOR-RELATED"/>
    <property type="match status" value="1"/>
</dbReference>
<dbReference type="Pfam" id="PF00679">
    <property type="entry name" value="EFG_C"/>
    <property type="match status" value="1"/>
</dbReference>
<dbReference type="Pfam" id="PF14492">
    <property type="entry name" value="EFG_III"/>
    <property type="match status" value="1"/>
</dbReference>
<dbReference type="Pfam" id="PF03764">
    <property type="entry name" value="EFG_IV"/>
    <property type="match status" value="1"/>
</dbReference>
<dbReference type="Pfam" id="PF00009">
    <property type="entry name" value="GTP_EFTU"/>
    <property type="match status" value="1"/>
</dbReference>
<dbReference type="Pfam" id="PF03144">
    <property type="entry name" value="GTP_EFTU_D2"/>
    <property type="match status" value="1"/>
</dbReference>
<dbReference type="PRINTS" id="PR00315">
    <property type="entry name" value="ELONGATNFCT"/>
</dbReference>
<dbReference type="SMART" id="SM00838">
    <property type="entry name" value="EFG_C"/>
    <property type="match status" value="1"/>
</dbReference>
<dbReference type="SMART" id="SM00889">
    <property type="entry name" value="EFG_IV"/>
    <property type="match status" value="1"/>
</dbReference>
<dbReference type="SUPFAM" id="SSF54980">
    <property type="entry name" value="EF-G C-terminal domain-like"/>
    <property type="match status" value="2"/>
</dbReference>
<dbReference type="SUPFAM" id="SSF52540">
    <property type="entry name" value="P-loop containing nucleoside triphosphate hydrolases"/>
    <property type="match status" value="1"/>
</dbReference>
<dbReference type="SUPFAM" id="SSF54211">
    <property type="entry name" value="Ribosomal protein S5 domain 2-like"/>
    <property type="match status" value="1"/>
</dbReference>
<dbReference type="SUPFAM" id="SSF50447">
    <property type="entry name" value="Translation proteins"/>
    <property type="match status" value="1"/>
</dbReference>
<dbReference type="PROSITE" id="PS51722">
    <property type="entry name" value="G_TR_2"/>
    <property type="match status" value="1"/>
</dbReference>
<evidence type="ECO:0000250" key="1"/>
<evidence type="ECO:0000305" key="2"/>
<feature type="chain" id="PRO_0000091027" description="Elongation factor 2">
    <location>
        <begin position="1"/>
        <end position="734"/>
    </location>
</feature>
<feature type="domain" description="tr-type G">
    <location>
        <begin position="18"/>
        <end position="259"/>
    </location>
</feature>
<feature type="binding site" evidence="1">
    <location>
        <begin position="27"/>
        <end position="34"/>
    </location>
    <ligand>
        <name>GTP</name>
        <dbReference type="ChEBI" id="CHEBI:37565"/>
    </ligand>
</feature>
<feature type="binding site" evidence="1">
    <location>
        <begin position="93"/>
        <end position="97"/>
    </location>
    <ligand>
        <name>GTP</name>
        <dbReference type="ChEBI" id="CHEBI:37565"/>
    </ligand>
</feature>
<feature type="binding site" evidence="1">
    <location>
        <begin position="147"/>
        <end position="150"/>
    </location>
    <ligand>
        <name>GTP</name>
        <dbReference type="ChEBI" id="CHEBI:37565"/>
    </ligand>
</feature>
<feature type="modified residue" description="Diphthamide" evidence="1">
    <location>
        <position position="600"/>
    </location>
</feature>
<keyword id="KW-0963">Cytoplasm</keyword>
<keyword id="KW-0251">Elongation factor</keyword>
<keyword id="KW-0342">GTP-binding</keyword>
<keyword id="KW-0547">Nucleotide-binding</keyword>
<keyword id="KW-0648">Protein biosynthesis</keyword>
<name>EF2_DESMO</name>
<proteinExistence type="inferred from homology"/>
<comment type="function">
    <text evidence="1">Catalyzes the GTP-dependent ribosomal translocation step during translation elongation. During this step, the ribosome changes from the pre-translocational (PRE) to the post-translocational (POST) state as the newly formed A-site-bound peptidyl-tRNA and P-site-bound deacylated tRNA move to the P and E sites, respectively. Catalyzes the coordinated movement of the two tRNA molecules, the mRNA and conformational changes in the ribosome (By similarity).</text>
</comment>
<comment type="subcellular location">
    <subcellularLocation>
        <location evidence="1">Cytoplasm</location>
    </subcellularLocation>
</comment>
<comment type="similarity">
    <text evidence="2">Belongs to the TRAFAC class translation factor GTPase superfamily. Classic translation factor GTPase family. EF-G/EF-2 subfamily.</text>
</comment>
<accession>P33159</accession>
<gene>
    <name type="primary">fusA</name>
    <name type="synonym">fus</name>
</gene>